<keyword id="KW-0002">3D-structure</keyword>
<keyword id="KW-0025">Alternative splicing</keyword>
<keyword id="KW-0963">Cytoplasm</keyword>
<keyword id="KW-0225">Disease variant</keyword>
<keyword id="KW-0256">Endoplasmic reticulum</keyword>
<keyword id="KW-0967">Endosome</keyword>
<keyword id="KW-0333">Golgi apparatus</keyword>
<keyword id="KW-0378">Hydrolase</keyword>
<keyword id="KW-0442">Lipid degradation</keyword>
<keyword id="KW-0443">Lipid metabolism</keyword>
<keyword id="KW-0449">Lipoprotein</keyword>
<keyword id="KW-0472">Membrane</keyword>
<keyword id="KW-0564">Palmitate</keyword>
<keyword id="KW-0597">Phosphoprotein</keyword>
<keyword id="KW-1267">Proteomics identification</keyword>
<keyword id="KW-1185">Reference proteome</keyword>
<keyword id="KW-0677">Repeat</keyword>
<dbReference type="EC" id="3.1.4.4" evidence="7 9"/>
<dbReference type="EMBL" id="U38545">
    <property type="protein sequence ID" value="AAB49031.1"/>
    <property type="molecule type" value="mRNA"/>
</dbReference>
<dbReference type="EMBL" id="BC068976">
    <property type="protein sequence ID" value="AAH68976.1"/>
    <property type="molecule type" value="mRNA"/>
</dbReference>
<dbReference type="EMBL" id="AJ276230">
    <property type="protein sequence ID" value="CAB76564.1"/>
    <property type="molecule type" value="mRNA"/>
</dbReference>
<dbReference type="CCDS" id="CCDS3216.1">
    <molecule id="Q13393-1"/>
</dbReference>
<dbReference type="CCDS" id="CCDS46957.1">
    <molecule id="Q13393-2"/>
</dbReference>
<dbReference type="RefSeq" id="NP_001123553.1">
    <molecule id="Q13393-2"/>
    <property type="nucleotide sequence ID" value="NM_001130081.3"/>
</dbReference>
<dbReference type="RefSeq" id="NP_002653.1">
    <molecule id="Q13393-1"/>
    <property type="nucleotide sequence ID" value="NM_002662.5"/>
</dbReference>
<dbReference type="RefSeq" id="XP_005247590.1">
    <molecule id="Q13393-1"/>
    <property type="nucleotide sequence ID" value="XM_005247533.3"/>
</dbReference>
<dbReference type="RefSeq" id="XP_005247591.1">
    <molecule id="Q13393-2"/>
    <property type="nucleotide sequence ID" value="XM_005247534.3"/>
</dbReference>
<dbReference type="RefSeq" id="XP_011511199.1">
    <molecule id="Q13393-4"/>
    <property type="nucleotide sequence ID" value="XM_011512897.2"/>
</dbReference>
<dbReference type="RefSeq" id="XP_047304272.1">
    <molecule id="Q13393-1"/>
    <property type="nucleotide sequence ID" value="XM_047448316.1"/>
</dbReference>
<dbReference type="RefSeq" id="XP_054202834.1">
    <molecule id="Q13393-1"/>
    <property type="nucleotide sequence ID" value="XM_054346859.1"/>
</dbReference>
<dbReference type="RefSeq" id="XP_054202835.1">
    <molecule id="Q13393-1"/>
    <property type="nucleotide sequence ID" value="XM_054346860.1"/>
</dbReference>
<dbReference type="RefSeq" id="XP_054202836.1">
    <molecule id="Q13393-2"/>
    <property type="nucleotide sequence ID" value="XM_054346861.1"/>
</dbReference>
<dbReference type="RefSeq" id="XP_054202837.1">
    <molecule id="Q13393-4"/>
    <property type="nucleotide sequence ID" value="XM_054346862.1"/>
</dbReference>
<dbReference type="PDB" id="6U8Z">
    <property type="method" value="X-ray"/>
    <property type="resolution" value="1.80 A"/>
    <property type="chains" value="A=330-1074"/>
</dbReference>
<dbReference type="PDBsum" id="6U8Z"/>
<dbReference type="SMR" id="Q13393"/>
<dbReference type="BioGRID" id="111353">
    <property type="interactions" value="133"/>
</dbReference>
<dbReference type="CORUM" id="Q13393"/>
<dbReference type="DIP" id="DIP-40821N"/>
<dbReference type="FunCoup" id="Q13393">
    <property type="interactions" value="2125"/>
</dbReference>
<dbReference type="IntAct" id="Q13393">
    <property type="interactions" value="79"/>
</dbReference>
<dbReference type="MINT" id="Q13393"/>
<dbReference type="STRING" id="9606.ENSP00000342793"/>
<dbReference type="BindingDB" id="Q13393"/>
<dbReference type="ChEMBL" id="CHEMBL2536"/>
<dbReference type="DrugBank" id="DB00122">
    <property type="generic name" value="Choline"/>
</dbReference>
<dbReference type="DrugBank" id="DB14006">
    <property type="generic name" value="Choline salicylate"/>
</dbReference>
<dbReference type="DrugBank" id="DB05301">
    <property type="generic name" value="LAX-101"/>
</dbReference>
<dbReference type="DrugBank" id="DB09031">
    <property type="generic name" value="Miltefosine"/>
</dbReference>
<dbReference type="DrugCentral" id="Q13393"/>
<dbReference type="GuidetoPHARMACOLOGY" id="1433"/>
<dbReference type="SwissLipids" id="SLP:000000149"/>
<dbReference type="GlyGen" id="Q13393">
    <property type="glycosylation" value="4 sites, 1 N-linked glycan (1 site), 1 O-linked glycan (3 sites)"/>
</dbReference>
<dbReference type="iPTMnet" id="Q13393"/>
<dbReference type="PhosphoSitePlus" id="Q13393"/>
<dbReference type="SwissPalm" id="Q13393"/>
<dbReference type="BioMuta" id="PLD1"/>
<dbReference type="DMDM" id="2499703"/>
<dbReference type="jPOST" id="Q13393"/>
<dbReference type="MassIVE" id="Q13393"/>
<dbReference type="PaxDb" id="9606-ENSP00000342793"/>
<dbReference type="PeptideAtlas" id="Q13393"/>
<dbReference type="ProteomicsDB" id="59360">
    <molecule id="Q13393-1"/>
</dbReference>
<dbReference type="ProteomicsDB" id="59361">
    <molecule id="Q13393-2"/>
</dbReference>
<dbReference type="ProteomicsDB" id="59362">
    <molecule id="Q13393-3"/>
</dbReference>
<dbReference type="ProteomicsDB" id="59363">
    <molecule id="Q13393-4"/>
</dbReference>
<dbReference type="Pumba" id="Q13393"/>
<dbReference type="TopDownProteomics" id="Q13393-2">
    <molecule id="Q13393-2"/>
</dbReference>
<dbReference type="Antibodypedia" id="3866">
    <property type="antibodies" value="304 antibodies from 39 providers"/>
</dbReference>
<dbReference type="DNASU" id="5337"/>
<dbReference type="Ensembl" id="ENST00000351298.9">
    <molecule id="Q13393-1"/>
    <property type="protein sequence ID" value="ENSP00000342793.4"/>
    <property type="gene ID" value="ENSG00000075651.17"/>
</dbReference>
<dbReference type="Ensembl" id="ENST00000356327.9">
    <molecule id="Q13393-2"/>
    <property type="protein sequence ID" value="ENSP00000348681.5"/>
    <property type="gene ID" value="ENSG00000075651.17"/>
</dbReference>
<dbReference type="GeneID" id="5337"/>
<dbReference type="KEGG" id="hsa:5337"/>
<dbReference type="MANE-Select" id="ENST00000351298.9">
    <property type="protein sequence ID" value="ENSP00000342793.4"/>
    <property type="RefSeq nucleotide sequence ID" value="NM_002662.5"/>
    <property type="RefSeq protein sequence ID" value="NP_002653.1"/>
</dbReference>
<dbReference type="UCSC" id="uc003fhs.4">
    <molecule id="Q13393-1"/>
    <property type="organism name" value="human"/>
</dbReference>
<dbReference type="AGR" id="HGNC:9067"/>
<dbReference type="CTD" id="5337"/>
<dbReference type="DisGeNET" id="5337"/>
<dbReference type="GeneCards" id="PLD1"/>
<dbReference type="HGNC" id="HGNC:9067">
    <property type="gene designation" value="PLD1"/>
</dbReference>
<dbReference type="HPA" id="ENSG00000075651">
    <property type="expression patterns" value="Tissue enhanced (gallbladder)"/>
</dbReference>
<dbReference type="MalaCards" id="PLD1"/>
<dbReference type="MIM" id="212093">
    <property type="type" value="phenotype"/>
</dbReference>
<dbReference type="MIM" id="602382">
    <property type="type" value="gene"/>
</dbReference>
<dbReference type="neXtProt" id="NX_Q13393"/>
<dbReference type="OpenTargets" id="ENSG00000075651"/>
<dbReference type="PharmGKB" id="PA164742228"/>
<dbReference type="VEuPathDB" id="HostDB:ENSG00000075651"/>
<dbReference type="eggNOG" id="KOG1329">
    <property type="taxonomic scope" value="Eukaryota"/>
</dbReference>
<dbReference type="GeneTree" id="ENSGT00940000155015"/>
<dbReference type="HOGENOM" id="CLU_000690_2_0_1"/>
<dbReference type="InParanoid" id="Q13393"/>
<dbReference type="OMA" id="EWRLDQI"/>
<dbReference type="OrthoDB" id="14911at2759"/>
<dbReference type="PAN-GO" id="Q13393">
    <property type="GO annotations" value="6 GO annotations based on evolutionary models"/>
</dbReference>
<dbReference type="PhylomeDB" id="Q13393"/>
<dbReference type="TreeFam" id="TF300589"/>
<dbReference type="BioCyc" id="MetaCyc:HS01185-MONOMER"/>
<dbReference type="BRENDA" id="3.1.4.4">
    <property type="organism ID" value="2681"/>
</dbReference>
<dbReference type="PathwayCommons" id="Q13393"/>
<dbReference type="Reactome" id="R-HSA-1483148">
    <property type="pathway name" value="Synthesis of PG"/>
</dbReference>
<dbReference type="Reactome" id="R-HSA-1483166">
    <property type="pathway name" value="Synthesis of PA"/>
</dbReference>
<dbReference type="Reactome" id="R-HSA-2029485">
    <property type="pathway name" value="Role of phospholipids in phagocytosis"/>
</dbReference>
<dbReference type="Reactome" id="R-HSA-6798695">
    <property type="pathway name" value="Neutrophil degranulation"/>
</dbReference>
<dbReference type="Reactome" id="R-HSA-8980692">
    <property type="pathway name" value="RHOA GTPase cycle"/>
</dbReference>
<dbReference type="Reactome" id="R-HSA-9013148">
    <property type="pathway name" value="CDC42 GTPase cycle"/>
</dbReference>
<dbReference type="Reactome" id="R-HSA-9013149">
    <property type="pathway name" value="RAC1 GTPase cycle"/>
</dbReference>
<dbReference type="Reactome" id="R-HSA-9013408">
    <property type="pathway name" value="RHOG GTPase cycle"/>
</dbReference>
<dbReference type="SignaLink" id="Q13393"/>
<dbReference type="SIGNOR" id="Q13393"/>
<dbReference type="BioGRID-ORCS" id="5337">
    <property type="hits" value="12 hits in 1159 CRISPR screens"/>
</dbReference>
<dbReference type="ChiTaRS" id="PLD1">
    <property type="organism name" value="human"/>
</dbReference>
<dbReference type="GeneWiki" id="Phospholipase_D1"/>
<dbReference type="GenomeRNAi" id="5337"/>
<dbReference type="Pharos" id="Q13393">
    <property type="development level" value="Tchem"/>
</dbReference>
<dbReference type="PRO" id="PR:Q13393"/>
<dbReference type="Proteomes" id="UP000005640">
    <property type="component" value="Chromosome 3"/>
</dbReference>
<dbReference type="RNAct" id="Q13393">
    <property type="molecule type" value="protein"/>
</dbReference>
<dbReference type="Bgee" id="ENSG00000075651">
    <property type="expression patterns" value="Expressed in gall bladder and 178 other cell types or tissues"/>
</dbReference>
<dbReference type="ExpressionAtlas" id="Q13393">
    <property type="expression patterns" value="baseline and differential"/>
</dbReference>
<dbReference type="GO" id="GO:0016324">
    <property type="term" value="C:apical plasma membrane"/>
    <property type="evidence" value="ECO:0000314"/>
    <property type="project" value="UniProtKB"/>
</dbReference>
<dbReference type="GO" id="GO:0098981">
    <property type="term" value="C:cholinergic synapse"/>
    <property type="evidence" value="ECO:0000314"/>
    <property type="project" value="SynGO"/>
</dbReference>
<dbReference type="GO" id="GO:0031410">
    <property type="term" value="C:cytoplasmic vesicle"/>
    <property type="evidence" value="ECO:0000318"/>
    <property type="project" value="GO_Central"/>
</dbReference>
<dbReference type="GO" id="GO:0030139">
    <property type="term" value="C:endocytic vesicle"/>
    <property type="evidence" value="ECO:0000314"/>
    <property type="project" value="UniProtKB"/>
</dbReference>
<dbReference type="GO" id="GO:0005789">
    <property type="term" value="C:endoplasmic reticulum membrane"/>
    <property type="evidence" value="ECO:0000304"/>
    <property type="project" value="Reactome"/>
</dbReference>
<dbReference type="GO" id="GO:0005768">
    <property type="term" value="C:endosome"/>
    <property type="evidence" value="ECO:0000314"/>
    <property type="project" value="MGI"/>
</dbReference>
<dbReference type="GO" id="GO:0005794">
    <property type="term" value="C:Golgi apparatus"/>
    <property type="evidence" value="ECO:0000314"/>
    <property type="project" value="MGI"/>
</dbReference>
<dbReference type="GO" id="GO:0000139">
    <property type="term" value="C:Golgi membrane"/>
    <property type="evidence" value="ECO:0007669"/>
    <property type="project" value="UniProtKB-SubCell"/>
</dbReference>
<dbReference type="GO" id="GO:0031902">
    <property type="term" value="C:late endosome membrane"/>
    <property type="evidence" value="ECO:0007669"/>
    <property type="project" value="UniProtKB-SubCell"/>
</dbReference>
<dbReference type="GO" id="GO:0005765">
    <property type="term" value="C:lysosomal membrane"/>
    <property type="evidence" value="ECO:0007005"/>
    <property type="project" value="UniProtKB"/>
</dbReference>
<dbReference type="GO" id="GO:0016020">
    <property type="term" value="C:membrane"/>
    <property type="evidence" value="ECO:0007005"/>
    <property type="project" value="UniProtKB"/>
</dbReference>
<dbReference type="GO" id="GO:0048471">
    <property type="term" value="C:perinuclear region of cytoplasm"/>
    <property type="evidence" value="ECO:0007669"/>
    <property type="project" value="UniProtKB-SubCell"/>
</dbReference>
<dbReference type="GO" id="GO:0005886">
    <property type="term" value="C:plasma membrane"/>
    <property type="evidence" value="ECO:0000318"/>
    <property type="project" value="GO_Central"/>
</dbReference>
<dbReference type="GO" id="GO:0035579">
    <property type="term" value="C:specific granule membrane"/>
    <property type="evidence" value="ECO:0000304"/>
    <property type="project" value="Reactome"/>
</dbReference>
<dbReference type="GO" id="GO:0070821">
    <property type="term" value="C:tertiary granule membrane"/>
    <property type="evidence" value="ECO:0000304"/>
    <property type="project" value="Reactome"/>
</dbReference>
<dbReference type="GO" id="GO:0035091">
    <property type="term" value="F:phosphatidylinositol binding"/>
    <property type="evidence" value="ECO:0007669"/>
    <property type="project" value="InterPro"/>
</dbReference>
<dbReference type="GO" id="GO:0004630">
    <property type="term" value="F:phospholipase D activity"/>
    <property type="evidence" value="ECO:0000314"/>
    <property type="project" value="UniProtKB"/>
</dbReference>
<dbReference type="GO" id="GO:0031670">
    <property type="term" value="P:cellular response to nutrient"/>
    <property type="evidence" value="ECO:0000314"/>
    <property type="project" value="UniProt"/>
</dbReference>
<dbReference type="GO" id="GO:0006935">
    <property type="term" value="P:chemotaxis"/>
    <property type="evidence" value="ECO:0000304"/>
    <property type="project" value="ProtInc"/>
</dbReference>
<dbReference type="GO" id="GO:0006654">
    <property type="term" value="P:phosphatidic acid biosynthetic process"/>
    <property type="evidence" value="ECO:0000304"/>
    <property type="project" value="Reactome"/>
</dbReference>
<dbReference type="GO" id="GO:0009395">
    <property type="term" value="P:phospholipid catabolic process"/>
    <property type="evidence" value="ECO:0000318"/>
    <property type="project" value="GO_Central"/>
</dbReference>
<dbReference type="GO" id="GO:0045727">
    <property type="term" value="P:positive regulation of translation"/>
    <property type="evidence" value="ECO:0000315"/>
    <property type="project" value="CACAO"/>
</dbReference>
<dbReference type="GO" id="GO:0007265">
    <property type="term" value="P:Ras protein signal transduction"/>
    <property type="evidence" value="ECO:0000304"/>
    <property type="project" value="ProtInc"/>
</dbReference>
<dbReference type="GO" id="GO:0032534">
    <property type="term" value="P:regulation of microvillus assembly"/>
    <property type="evidence" value="ECO:0000315"/>
    <property type="project" value="UniProtKB"/>
</dbReference>
<dbReference type="GO" id="GO:0098693">
    <property type="term" value="P:regulation of synaptic vesicle cycle"/>
    <property type="evidence" value="ECO:0000314"/>
    <property type="project" value="SynGO"/>
</dbReference>
<dbReference type="GO" id="GO:0060627">
    <property type="term" value="P:regulation of vesicle-mediated transport"/>
    <property type="evidence" value="ECO:0000318"/>
    <property type="project" value="GO_Central"/>
</dbReference>
<dbReference type="GO" id="GO:0007264">
    <property type="term" value="P:small GTPase-mediated signal transduction"/>
    <property type="evidence" value="ECO:0000304"/>
    <property type="project" value="ProtInc"/>
</dbReference>
<dbReference type="CDD" id="cd01254">
    <property type="entry name" value="PH_PLD"/>
    <property type="match status" value="1"/>
</dbReference>
<dbReference type="CDD" id="cd09842">
    <property type="entry name" value="PLDc_vPLD1_1"/>
    <property type="match status" value="1"/>
</dbReference>
<dbReference type="CDD" id="cd09844">
    <property type="entry name" value="PLDc_vPLD1_2"/>
    <property type="match status" value="1"/>
</dbReference>
<dbReference type="CDD" id="cd07296">
    <property type="entry name" value="PX_PLD1"/>
    <property type="match status" value="1"/>
</dbReference>
<dbReference type="FunFam" id="2.30.29.30:FF:000114">
    <property type="entry name" value="Phospholipase"/>
    <property type="match status" value="1"/>
</dbReference>
<dbReference type="FunFam" id="3.30.1520.10:FF:000021">
    <property type="entry name" value="Phospholipase"/>
    <property type="match status" value="1"/>
</dbReference>
<dbReference type="FunFam" id="3.30.870.10:FF:000005">
    <property type="entry name" value="Phospholipase"/>
    <property type="match status" value="1"/>
</dbReference>
<dbReference type="FunFam" id="3.30.870.10:FF:000009">
    <property type="entry name" value="Phospholipase"/>
    <property type="match status" value="1"/>
</dbReference>
<dbReference type="FunFam" id="3.30.870.10:FF:000018">
    <property type="entry name" value="Phospholipase"/>
    <property type="match status" value="1"/>
</dbReference>
<dbReference type="Gene3D" id="3.30.870.10">
    <property type="entry name" value="Endonuclease Chain A"/>
    <property type="match status" value="2"/>
</dbReference>
<dbReference type="Gene3D" id="3.30.1520.10">
    <property type="entry name" value="Phox-like domain"/>
    <property type="match status" value="1"/>
</dbReference>
<dbReference type="Gene3D" id="2.30.29.30">
    <property type="entry name" value="Pleckstrin-homology domain (PH domain)/Phosphotyrosine-binding domain (PTB)"/>
    <property type="match status" value="1"/>
</dbReference>
<dbReference type="InterPro" id="IPR011993">
    <property type="entry name" value="PH-like_dom_sf"/>
</dbReference>
<dbReference type="InterPro" id="IPR001849">
    <property type="entry name" value="PH_domain"/>
</dbReference>
<dbReference type="InterPro" id="IPR025202">
    <property type="entry name" value="PLD-like_dom"/>
</dbReference>
<dbReference type="InterPro" id="IPR001736">
    <property type="entry name" value="PLipase_D/transphosphatidylase"/>
</dbReference>
<dbReference type="InterPro" id="IPR016555">
    <property type="entry name" value="PLipase_D_euk"/>
</dbReference>
<dbReference type="InterPro" id="IPR015679">
    <property type="entry name" value="PLipase_D_fam"/>
</dbReference>
<dbReference type="InterPro" id="IPR001683">
    <property type="entry name" value="PX_dom"/>
</dbReference>
<dbReference type="InterPro" id="IPR036871">
    <property type="entry name" value="PX_dom_sf"/>
</dbReference>
<dbReference type="PANTHER" id="PTHR18896">
    <property type="entry name" value="PHOSPHOLIPASE D"/>
    <property type="match status" value="1"/>
</dbReference>
<dbReference type="PANTHER" id="PTHR18896:SF57">
    <property type="entry name" value="PHOSPHOLIPASE D1"/>
    <property type="match status" value="1"/>
</dbReference>
<dbReference type="Pfam" id="PF00169">
    <property type="entry name" value="PH"/>
    <property type="match status" value="1"/>
</dbReference>
<dbReference type="Pfam" id="PF00614">
    <property type="entry name" value="PLDc"/>
    <property type="match status" value="1"/>
</dbReference>
<dbReference type="Pfam" id="PF13091">
    <property type="entry name" value="PLDc_2"/>
    <property type="match status" value="1"/>
</dbReference>
<dbReference type="Pfam" id="PF00787">
    <property type="entry name" value="PX"/>
    <property type="match status" value="1"/>
</dbReference>
<dbReference type="PIRSF" id="PIRSF009376">
    <property type="entry name" value="Phospholipase_D_euk"/>
    <property type="match status" value="1"/>
</dbReference>
<dbReference type="SMART" id="SM00233">
    <property type="entry name" value="PH"/>
    <property type="match status" value="1"/>
</dbReference>
<dbReference type="SMART" id="SM00155">
    <property type="entry name" value="PLDc"/>
    <property type="match status" value="2"/>
</dbReference>
<dbReference type="SMART" id="SM00312">
    <property type="entry name" value="PX"/>
    <property type="match status" value="1"/>
</dbReference>
<dbReference type="SUPFAM" id="SSF50729">
    <property type="entry name" value="PH domain-like"/>
    <property type="match status" value="1"/>
</dbReference>
<dbReference type="SUPFAM" id="SSF56024">
    <property type="entry name" value="Phospholipase D/nuclease"/>
    <property type="match status" value="3"/>
</dbReference>
<dbReference type="SUPFAM" id="SSF64268">
    <property type="entry name" value="PX domain"/>
    <property type="match status" value="1"/>
</dbReference>
<dbReference type="PROSITE" id="PS50035">
    <property type="entry name" value="PLD"/>
    <property type="match status" value="2"/>
</dbReference>
<dbReference type="PROSITE" id="PS50195">
    <property type="entry name" value="PX"/>
    <property type="match status" value="1"/>
</dbReference>
<reference key="1">
    <citation type="journal article" date="1995" name="J. Biol. Chem.">
        <title>Human ADP-ribosylation factor-activated phosphatidylcholine-specific phospholipase D defines a new and highly conserved gene family.</title>
        <authorList>
            <person name="Hammond S.M."/>
            <person name="Altshuller Y.M."/>
            <person name="Sung T.-C."/>
            <person name="Rudge S.A."/>
            <person name="Rose K."/>
            <person name="Engebrecht J."/>
            <person name="Morris A.J."/>
            <person name="Frohman M.A."/>
        </authorList>
    </citation>
    <scope>NUCLEOTIDE SEQUENCE [MRNA] (ISOFORM PLD1A)</scope>
    <scope>CATALYTIC ACTIVITY</scope>
    <scope>FUNCTION</scope>
    <scope>ACTIVITY REGULATION</scope>
    <scope>SUBCELLULAR LOCATION</scope>
</reference>
<reference key="2">
    <citation type="journal article" date="1997" name="J. Biol. Chem.">
        <title>Characterization of two alternately spliced forms of phospholipase D1. Activation of the purified enzymes by phosphatidylinositol 4,5-bisphosphate, ADP-ribosylation factor, and Rho family monomeric GTP-binding proteins and protein kinase C-alpha.</title>
        <authorList>
            <person name="Hammond S.M."/>
            <person name="Jenco J.M."/>
            <person name="Nakashima S."/>
            <person name="Cadwallader K."/>
            <person name="Gu Q.-M."/>
            <person name="Cook S."/>
            <person name="Nozawa Y."/>
            <person name="Prestwich G.D."/>
            <person name="Frohman M.A."/>
            <person name="Morris A.J."/>
        </authorList>
    </citation>
    <scope>NUCLEOTIDE SEQUENCE [MRNA] (ISOFORMS PLD1A AND PLD1B)</scope>
</reference>
<reference key="3">
    <citation type="journal article" date="1998" name="FASEB J.">
        <title>Characterization of human PLD2 and the analysis of PLD isoform splice variants.</title>
        <authorList>
            <person name="Steed P.M."/>
            <person name="Clark K.L."/>
            <person name="Boyar W.C."/>
            <person name="Lasala D.J."/>
        </authorList>
    </citation>
    <scope>NUCLEOTIDE SEQUENCE [MRNA] (ISOFORMS PLD1A; PLD1B AND PLD1C)</scope>
    <source>
        <tissue>Brain</tissue>
        <tissue>Cervix carcinoma</tissue>
        <tissue>Chondrocyte</tissue>
        <tissue>Skeletal muscle</tissue>
    </source>
</reference>
<reference key="4">
    <citation type="journal article" date="2004" name="Genome Res.">
        <title>The status, quality, and expansion of the NIH full-length cDNA project: the Mammalian Gene Collection (MGC).</title>
        <authorList>
            <consortium name="The MGC Project Team"/>
        </authorList>
    </citation>
    <scope>NUCLEOTIDE SEQUENCE [LARGE SCALE MRNA] (ISOFORM PLD1A)</scope>
    <source>
        <tissue>Testis</tissue>
    </source>
</reference>
<reference key="5">
    <citation type="submission" date="2000-02" db="EMBL/GenBank/DDBJ databases">
        <title>A novel human phospholipase D1 splice variant displays conserved regulation in vitro but altered localisation in vivo.</title>
        <authorList>
            <person name="Hughes W.E."/>
            <person name="Parker P.J."/>
        </authorList>
    </citation>
    <scope>NUCLEOTIDE SEQUENCE [MRNA] OF 739-1074 (ISOFORM PLD1D)</scope>
</reference>
<reference key="6">
    <citation type="journal article" date="1998" name="J. Biol. Chem.">
        <title>Cloning and initial characterization of a human phospholipase D2 (hPLD2). ADP-ribosylation factor regulates hPLD2.</title>
        <authorList>
            <person name="Lopez I."/>
            <person name="Arnold R.S."/>
            <person name="Lambeth J.D."/>
        </authorList>
    </citation>
    <scope>TISSUE SPECIFICITY</scope>
    <scope>ACTIVITY REGULATION</scope>
    <scope>FUNCTION</scope>
    <scope>CATALYTIC ACTIVITY</scope>
</reference>
<reference key="7">
    <citation type="journal article" date="2000" name="EMBO J.">
        <title>Interaction of the type Ialpha PIPkinase with phospholipase D: a role for the local generation of phosphatidylinositol 4, 5-bisphosphate in the regulation of PLD2 activity.</title>
        <authorList>
            <person name="Divecha N."/>
            <person name="Roefs M."/>
            <person name="Halstead J.R."/>
            <person name="D'Andrea S."/>
            <person name="Fernandez-Borga M."/>
            <person name="Oomen L."/>
            <person name="Saqib K.M."/>
            <person name="Wakelam M.J.O."/>
            <person name="D'Santos C."/>
        </authorList>
    </citation>
    <scope>INTERACTION WITH PIP5K1B</scope>
</reference>
<reference key="8">
    <citation type="journal article" date="2006" name="Cell">
        <title>Global, in vivo, and site-specific phosphorylation dynamics in signaling networks.</title>
        <authorList>
            <person name="Olsen J.V."/>
            <person name="Blagoev B."/>
            <person name="Gnad F."/>
            <person name="Macek B."/>
            <person name="Kumar C."/>
            <person name="Mortensen P."/>
            <person name="Mann M."/>
        </authorList>
    </citation>
    <scope>PHOSPHORYLATION [LARGE SCALE ANALYSIS] AT SER-629</scope>
    <scope>IDENTIFICATION BY MASS SPECTROMETRY [LARGE SCALE ANALYSIS]</scope>
    <source>
        <tissue>Cervix carcinoma</tissue>
    </source>
</reference>
<reference key="9">
    <citation type="journal article" date="2008" name="Proc. Natl. Acad. Sci. U.S.A.">
        <title>A quantitative atlas of mitotic phosphorylation.</title>
        <authorList>
            <person name="Dephoure N."/>
            <person name="Zhou C."/>
            <person name="Villen J."/>
            <person name="Beausoleil S.A."/>
            <person name="Bakalarski C.E."/>
            <person name="Elledge S.J."/>
            <person name="Gygi S.P."/>
        </authorList>
    </citation>
    <scope>IDENTIFICATION BY MASS SPECTROMETRY [LARGE SCALE ANALYSIS]</scope>
    <source>
        <tissue>Cervix carcinoma</tissue>
    </source>
</reference>
<reference key="10">
    <citation type="journal article" date="2013" name="J. Proteome Res.">
        <title>Toward a comprehensive characterization of a human cancer cell phosphoproteome.</title>
        <authorList>
            <person name="Zhou H."/>
            <person name="Di Palma S."/>
            <person name="Preisinger C."/>
            <person name="Peng M."/>
            <person name="Polat A.N."/>
            <person name="Heck A.J."/>
            <person name="Mohammed S."/>
        </authorList>
    </citation>
    <scope>PHOSPHORYLATION [LARGE SCALE ANALYSIS] AT SER-561 AND SER-629</scope>
    <scope>IDENTIFICATION BY MASS SPECTROMETRY [LARGE SCALE ANALYSIS]</scope>
    <source>
        <tissue>Cervix carcinoma</tissue>
        <tissue>Erythroleukemia</tissue>
    </source>
</reference>
<reference key="11">
    <citation type="journal article" date="2014" name="J. Proteomics">
        <title>An enzyme assisted RP-RPLC approach for in-depth analysis of human liver phosphoproteome.</title>
        <authorList>
            <person name="Bian Y."/>
            <person name="Song C."/>
            <person name="Cheng K."/>
            <person name="Dong M."/>
            <person name="Wang F."/>
            <person name="Huang J."/>
            <person name="Sun D."/>
            <person name="Wang L."/>
            <person name="Ye M."/>
            <person name="Zou H."/>
        </authorList>
    </citation>
    <scope>IDENTIFICATION BY MASS SPECTROMETRY [LARGE SCALE ANALYSIS]</scope>
    <source>
        <tissue>Liver</tissue>
    </source>
</reference>
<reference key="12">
    <citation type="journal article" date="2015" name="Mol. Cell">
        <title>Rapid mitogenic regulation of the mTORC1 inhibitor, DEPTOR, by phosphatidic acid.</title>
        <authorList>
            <person name="Yoon M.S."/>
            <person name="Rosenberger C.L."/>
            <person name="Wu C."/>
            <person name="Truong N."/>
            <person name="Sweedler J.V."/>
            <person name="Chen J."/>
        </authorList>
    </citation>
    <scope>FUNCTION</scope>
    <scope>CATALYTIC ACTIVITY</scope>
</reference>
<reference key="13">
    <citation type="journal article" date="2015" name="Proteomics">
        <title>N-terminome analysis of the human mitochondrial proteome.</title>
        <authorList>
            <person name="Vaca Jacome A.S."/>
            <person name="Rabilloud T."/>
            <person name="Schaeffer-Reiss C."/>
            <person name="Rompais M."/>
            <person name="Ayoub D."/>
            <person name="Lane L."/>
            <person name="Bairoch A."/>
            <person name="Van Dorsselaer A."/>
            <person name="Carapito C."/>
        </authorList>
    </citation>
    <scope>IDENTIFICATION BY MASS SPECTROMETRY [LARGE SCALE ANALYSIS]</scope>
</reference>
<reference key="14">
    <citation type="journal article" date="2017" name="J. Med. Genet.">
        <title>Congenital valvular defects associated with deleterious mutations in the PLD1 gene.</title>
        <authorList>
            <person name="Ta-Shma A."/>
            <person name="Zhang K."/>
            <person name="Salimova E."/>
            <person name="Zernecke A."/>
            <person name="Sieiro-Mosti D."/>
            <person name="Stegner D."/>
            <person name="Furtado M."/>
            <person name="Shaag A."/>
            <person name="Perles Z."/>
            <person name="Nieswandt B."/>
            <person name="Rein A.J."/>
            <person name="Rosenthal N."/>
            <person name="Neiman A.M."/>
            <person name="Elpeleg O."/>
        </authorList>
    </citation>
    <scope>INVOLVEMENT IN CVDP1</scope>
    <scope>VARIANT CVDP1 PRO-442</scope>
</reference>
<evidence type="ECO:0000250" key="1"/>
<evidence type="ECO:0000250" key="2">
    <source>
        <dbReference type="UniProtKB" id="P70496"/>
    </source>
</evidence>
<evidence type="ECO:0000250" key="3">
    <source>
        <dbReference type="UniProtKB" id="Q9Z280"/>
    </source>
</evidence>
<evidence type="ECO:0000255" key="4">
    <source>
        <dbReference type="PROSITE-ProRule" id="PRU00147"/>
    </source>
</evidence>
<evidence type="ECO:0000255" key="5">
    <source>
        <dbReference type="PROSITE-ProRule" id="PRU00153"/>
    </source>
</evidence>
<evidence type="ECO:0000269" key="6">
    <source>
    </source>
</evidence>
<evidence type="ECO:0000269" key="7">
    <source>
    </source>
</evidence>
<evidence type="ECO:0000269" key="8">
    <source>
    </source>
</evidence>
<evidence type="ECO:0000269" key="9">
    <source>
    </source>
</evidence>
<evidence type="ECO:0000269" key="10">
    <source>
    </source>
</evidence>
<evidence type="ECO:0000303" key="11">
    <source>
    </source>
</evidence>
<evidence type="ECO:0000303" key="12">
    <source>
    </source>
</evidence>
<evidence type="ECO:0000303" key="13">
    <source ref="5"/>
</evidence>
<evidence type="ECO:0000305" key="14"/>
<evidence type="ECO:0000305" key="15">
    <source>
    </source>
</evidence>
<evidence type="ECO:0000305" key="16">
    <source>
    </source>
</evidence>
<evidence type="ECO:0000305" key="17">
    <source>
    </source>
</evidence>
<evidence type="ECO:0000312" key="18">
    <source>
        <dbReference type="HGNC" id="HGNC:9067"/>
    </source>
</evidence>
<evidence type="ECO:0007744" key="19">
    <source>
    </source>
</evidence>
<evidence type="ECO:0007744" key="20">
    <source>
    </source>
</evidence>
<evidence type="ECO:0007829" key="21">
    <source>
        <dbReference type="PDB" id="6U8Z"/>
    </source>
</evidence>
<proteinExistence type="evidence at protein level"/>
<gene>
    <name evidence="18" type="primary">PLD1</name>
</gene>
<accession>Q13393</accession>
<protein>
    <recommendedName>
        <fullName evidence="14">Phospholipase D1</fullName>
        <shortName>PLD 1</shortName>
        <shortName>hPLD1</shortName>
        <ecNumber evidence="7 9">3.1.4.4</ecNumber>
    </recommendedName>
    <alternativeName>
        <fullName>Choline phosphatase 1</fullName>
    </alternativeName>
    <alternativeName>
        <fullName>Phosphatidylcholine-hydrolyzing phospholipase D1</fullName>
    </alternativeName>
</protein>
<sequence length="1074" mass="124184">MSLKNEPRVNTSALQKIAADMSNIIENLDTRELHFEGEEVDYDVSPSDPKIQEVYIPFSAIYNTQGFKEPNIQTYLSGCPIKAQVLEVERFTSTTRVPSINLYTIELTHGEFKWQVKRKFKHFQEFHRELLKYKAFIRIPIPTRRHTFRRQNVREEPREMPSLPRSSENMIREEQFLGRRKQLEDYLTKILKMPMYRNYHATTEFLDISQLSFIHDLGPKGIEGMIMKRSGGHRIPGLNCCGQGRACYRWSKRWLIVKDSFLLYMKPDSGAIAFVLLVDKEFKIKVGKKETETKYGIRIDNLSRTLILKCNSYRHARWWGGAIEEFIQKHGTNFLKDHRFGSYAAIQENALAKWYVNAKGYFEDVANAMEEANEEIFITDWWLSPEIFLKRPVVEGNRWRLDCILKRKAQQGVRIFIMLYKEVELALGINSEYTKRTLMRLHPNIKVMRHPDHVSSTVYLWAHHEKLVIIDQSVAFVGGIDLAYGRWDDNEHRLTDVGSVKRVTSGPSLGSLPPAAMESMESLRLKDKNEPVQNLPIQKSIDDVDSKLKGIGKPRKFSKFSLYKQLHRHHLHDADSISSIDSTSSYFNHYRSHHNLIHGLKPHFKLFHPSSESEQGLTRPHADTGSIRSLQTGVGELHGETRFWHGKDYCNFVFKDWVQLDKPFADFIDRYSTPRMPWHDIASAVHGKAARDVARHFIQRWNFTKIMKSKYRSLSYPFLLPKSQTTAHELRYQVPGSVHANVQLLRSAADWSAGIKYHEESIHAAYVHVIENSRHYIYIENQFFISCADDKVVFNKIGDAIAQRILKAHRENQKYRVYVVIPLLPGFEGDISTGGGNALQAIMHFNYRTMCRGENSILGQLKAELGNQWINYISFCGLRTHAELEGNLVTELIYVHSKLLIADDNTVIIGSANINDRSMLGKRDSEMAVIVQDTETVPSVMDGKEYQAGRFARGLRLQCFRVVLGYLDDPSEDIQDPVSDKFFKEVWVSTAARNATIYDKVFRCLPNDEVHNLIQLRDFINKPVLAKEDPIRAEEELKKIRGFLVQFPFYFLSEESLLPSVGTKEAIVPMEVWT</sequence>
<comment type="function">
    <text evidence="3 7 9 10">Function as phospholipase selective for phosphatidylcholine (PubMed:25936805, PubMed:8530346, PubMed:9582313). Implicated as a critical step in numerous cellular pathways, including signal transduction, membrane trafficking, and the regulation of mitosis. May be involved in the regulation of perinuclear intravesicular membrane traffic (By similarity).</text>
</comment>
<comment type="catalytic activity">
    <reaction evidence="7 9 10">
        <text>a 1,2-diacyl-sn-glycero-3-phosphocholine + H2O = a 1,2-diacyl-sn-glycero-3-phosphate + choline + H(+)</text>
        <dbReference type="Rhea" id="RHEA:14445"/>
        <dbReference type="ChEBI" id="CHEBI:15354"/>
        <dbReference type="ChEBI" id="CHEBI:15377"/>
        <dbReference type="ChEBI" id="CHEBI:15378"/>
        <dbReference type="ChEBI" id="CHEBI:57643"/>
        <dbReference type="ChEBI" id="CHEBI:58608"/>
        <dbReference type="EC" id="3.1.4.4"/>
    </reaction>
    <physiologicalReaction direction="left-to-right" evidence="15 16 17">
        <dbReference type="Rhea" id="RHEA:14446"/>
    </physiologicalReaction>
</comment>
<comment type="catalytic activity">
    <reaction evidence="9">
        <text>ethanol + a 1,2-diacyl-sn-glycero-3-phosphocholine = 1,2-diacyl-sn-glycero-3-phosphoethanol + choline</text>
        <dbReference type="Rhea" id="RHEA:44868"/>
        <dbReference type="ChEBI" id="CHEBI:15354"/>
        <dbReference type="ChEBI" id="CHEBI:16236"/>
        <dbReference type="ChEBI" id="CHEBI:57643"/>
        <dbReference type="ChEBI" id="CHEBI:84672"/>
    </reaction>
    <physiologicalReaction direction="left-to-right" evidence="16">
        <dbReference type="Rhea" id="RHEA:44869"/>
    </physiologicalReaction>
</comment>
<comment type="catalytic activity">
    <reaction evidence="9 10">
        <text>1,2-dihexadecanoyl-sn-glycero-3-phosphocholine + H2O = 1,2-dihexadecanoyl-sn-glycero-3-phosphate + choline + H(+)</text>
        <dbReference type="Rhea" id="RHEA:44872"/>
        <dbReference type="ChEBI" id="CHEBI:15354"/>
        <dbReference type="ChEBI" id="CHEBI:15377"/>
        <dbReference type="ChEBI" id="CHEBI:15378"/>
        <dbReference type="ChEBI" id="CHEBI:72859"/>
        <dbReference type="ChEBI" id="CHEBI:72999"/>
    </reaction>
    <physiologicalReaction direction="left-to-right" evidence="16 17">
        <dbReference type="Rhea" id="RHEA:44873"/>
    </physiologicalReaction>
</comment>
<comment type="activity regulation">
    <text evidence="9 10">Stimulated by phosphatidylinositol 4,5-bisphosphate and phosphatidylinositol 3,4,5-trisphosphate, activated by the phosphokinase C-alpha, by the ADP-ribosylation factor-1 (ARF-1), and to a lesser extent by GTP-binding proteins: RHO A, RAC-1 and CDC42. Inhibited by oleate.</text>
</comment>
<comment type="subunit">
    <text evidence="6">Interacts with PIP5K1B.</text>
</comment>
<comment type="interaction">
    <interactant intactId="EBI-2827556">
        <id>Q13393</id>
    </interactant>
    <interactant intactId="EBI-77613">
        <id>P05067</id>
        <label>APP</label>
    </interactant>
    <organismsDiffer>false</organismsDiffer>
    <experiments>3</experiments>
</comment>
<comment type="interaction">
    <interactant intactId="EBI-2827556">
        <id>Q13393</id>
    </interactant>
    <interactant intactId="EBI-10254793">
        <id>Q6XD76</id>
        <label>ASCL4</label>
    </interactant>
    <organismsDiffer>false</organismsDiffer>
    <experiments>3</experiments>
</comment>
<comment type="interaction">
    <interactant intactId="EBI-2827556">
        <id>Q13393</id>
    </interactant>
    <interactant intactId="EBI-352733">
        <id>P23528</id>
        <label>CFL1</label>
    </interactant>
    <organismsDiffer>false</organismsDiffer>
    <experiments>4</experiments>
</comment>
<comment type="interaction">
    <interactant intactId="EBI-2827556">
        <id>Q13393</id>
    </interactant>
    <interactant intactId="EBI-10213520">
        <id>Q6NXG1</id>
        <label>ESRP1</label>
    </interactant>
    <organismsDiffer>false</organismsDiffer>
    <experiments>3</experiments>
</comment>
<comment type="interaction">
    <interactant intactId="EBI-2827556">
        <id>Q13393</id>
    </interactant>
    <interactant intactId="EBI-81610">
        <id>O15287</id>
        <label>FANCG</label>
    </interactant>
    <organismsDiffer>false</organismsDiffer>
    <experiments>3</experiments>
</comment>
<comment type="interaction">
    <interactant intactId="EBI-2827556">
        <id>Q13393</id>
    </interactant>
    <interactant intactId="EBI-6509505">
        <id>Q0VD86</id>
        <label>INCA1</label>
    </interactant>
    <organismsDiffer>false</organismsDiffer>
    <experiments>3</experiments>
</comment>
<comment type="interaction">
    <interactant intactId="EBI-2827556">
        <id>Q13393</id>
    </interactant>
    <interactant intactId="EBI-25830459">
        <id>Q6ZQX7-4</id>
        <label>LIAT1</label>
    </interactant>
    <organismsDiffer>false</organismsDiffer>
    <experiments>3</experiments>
</comment>
<comment type="interaction">
    <interactant intactId="EBI-2827556">
        <id>Q13393</id>
    </interactant>
    <interactant intactId="EBI-1055287">
        <id>Q15382</id>
        <label>RHEB</label>
    </interactant>
    <organismsDiffer>false</organismsDiffer>
    <experiments>2</experiments>
</comment>
<comment type="interaction">
    <interactant intactId="EBI-2827556">
        <id>Q13393</id>
    </interactant>
    <interactant intactId="EBI-1055655">
        <id>Q08AE8</id>
        <label>SPIRE1</label>
    </interactant>
    <organismsDiffer>false</organismsDiffer>
    <experiments>3</experiments>
</comment>
<comment type="interaction">
    <interactant intactId="EBI-2827556">
        <id>Q13393</id>
    </interactant>
    <interactant intactId="EBI-11285923">
        <id>Q9H7C4</id>
        <label>SYNC</label>
    </interactant>
    <organismsDiffer>false</organismsDiffer>
    <experiments>3</experiments>
</comment>
<comment type="interaction">
    <interactant intactId="EBI-2827556">
        <id>Q13393</id>
    </interactant>
    <interactant intactId="EBI-12000326">
        <id>P15923-3</id>
        <label>TCF3</label>
    </interactant>
    <organismsDiffer>false</organismsDiffer>
    <experiments>3</experiments>
</comment>
<comment type="interaction">
    <interactant intactId="EBI-2827556">
        <id>Q13393</id>
    </interactant>
    <interactant intactId="EBI-396540">
        <id>Q12888</id>
        <label>TP53BP1</label>
    </interactant>
    <organismsDiffer>false</organismsDiffer>
    <experiments>3</experiments>
</comment>
<comment type="subcellular location">
    <subcellularLocation>
        <location evidence="3">Cytoplasm</location>
        <location evidence="3">Perinuclear region</location>
    </subcellularLocation>
    <subcellularLocation>
        <location evidence="3">Endoplasmic reticulum membrane</location>
        <topology evidence="3">Lipid-anchor</topology>
        <orientation evidence="3">Cytoplasmic side</orientation>
    </subcellularLocation>
    <subcellularLocation>
        <location evidence="3">Golgi apparatus membrane</location>
        <topology evidence="3">Lipid-anchor</topology>
        <orientation evidence="3">Cytoplasmic side</orientation>
    </subcellularLocation>
    <subcellularLocation>
        <location evidence="3">Late endosome membrane</location>
        <topology evidence="3">Lipid-anchor</topology>
        <orientation evidence="3">Cytoplasmic side</orientation>
    </subcellularLocation>
</comment>
<comment type="alternative products">
    <event type="alternative splicing"/>
    <isoform>
        <id>Q13393-1</id>
        <name>PLD1A</name>
        <sequence type="displayed"/>
    </isoform>
    <isoform>
        <id>Q13393-2</id>
        <name>PLD1B</name>
        <sequence type="described" ref="VSP_005020"/>
    </isoform>
    <isoform>
        <id>Q13393-3</id>
        <name>PLD1C</name>
        <sequence type="described" ref="VSP_005018 VSP_005019"/>
    </isoform>
    <isoform>
        <id>Q13393-4</id>
        <name>PLD1D</name>
        <sequence type="described" ref="VSP_005021 VSP_005022"/>
    </isoform>
</comment>
<comment type="tissue specificity">
    <text evidence="10">Expressed abundantly in the pancreas and heart and at high levels in brain, placenta, spleen, uterus and small intestine.</text>
</comment>
<comment type="disease" evidence="8">
    <disease id="DI-05005">
        <name>Cardiac valvular dysplasia 1</name>
        <acronym>CVDP1</acronym>
        <description>An autosomal recessive form of congenital heart defects, characterized by valvular malformations involving the pulmonic, tricuspid and mitral valves.</description>
        <dbReference type="MIM" id="212093"/>
    </disease>
    <text>The disease is caused by variants affecting the gene represented in this entry.</text>
</comment>
<comment type="similarity">
    <text evidence="14">Belongs to the phospholipase D family.</text>
</comment>
<comment type="online information" name="Wikipedia">
    <link uri="https://en.wikipedia.org/wiki/Phospholipase_D"/>
    <text>Phospholipase D entry</text>
</comment>
<comment type="online information" name="Atlas of Genetics and Cytogenetics in Oncology and Haematology">
    <link uri="https://atlasgeneticsoncology.org/gene/43716/PLD1"/>
</comment>
<organism>
    <name type="scientific">Homo sapiens</name>
    <name type="common">Human</name>
    <dbReference type="NCBI Taxonomy" id="9606"/>
    <lineage>
        <taxon>Eukaryota</taxon>
        <taxon>Metazoa</taxon>
        <taxon>Chordata</taxon>
        <taxon>Craniata</taxon>
        <taxon>Vertebrata</taxon>
        <taxon>Euteleostomi</taxon>
        <taxon>Mammalia</taxon>
        <taxon>Eutheria</taxon>
        <taxon>Euarchontoglires</taxon>
        <taxon>Primates</taxon>
        <taxon>Haplorrhini</taxon>
        <taxon>Catarrhini</taxon>
        <taxon>Hominidae</taxon>
        <taxon>Homo</taxon>
    </lineage>
</organism>
<feature type="chain" id="PRO_0000218802" description="Phospholipase D1">
    <location>
        <begin position="1"/>
        <end position="1074"/>
    </location>
</feature>
<feature type="domain" description="PX" evidence="4">
    <location>
        <begin position="81"/>
        <end position="212"/>
    </location>
</feature>
<feature type="domain" description="PH">
    <location>
        <begin position="219"/>
        <end position="328"/>
    </location>
</feature>
<feature type="domain" description="PLD phosphodiesterase 1" evidence="5">
    <location>
        <begin position="459"/>
        <end position="486"/>
    </location>
</feature>
<feature type="domain" description="PLD phosphodiesterase 2" evidence="5">
    <location>
        <begin position="891"/>
        <end position="918"/>
    </location>
</feature>
<feature type="region of interest" description="Catalytic">
    <location>
        <begin position="463"/>
        <end position="928"/>
    </location>
</feature>
<feature type="modified residue" description="Phosphoserine" evidence="2">
    <location>
        <position position="499"/>
    </location>
</feature>
<feature type="modified residue" description="Phosphoserine" evidence="20">
    <location>
        <position position="561"/>
    </location>
</feature>
<feature type="modified residue" description="Phosphoserine" evidence="19 20">
    <location>
        <position position="629"/>
    </location>
</feature>
<feature type="lipid moiety-binding region" description="S-palmitoyl cysteine" evidence="1">
    <location>
        <position position="240"/>
    </location>
</feature>
<feature type="lipid moiety-binding region" description="S-palmitoyl cysteine" evidence="1">
    <location>
        <position position="241"/>
    </location>
</feature>
<feature type="splice variant" id="VSP_005018" description="In isoform PLD1C." evidence="12">
    <original>PAAMESMESLRLKDKNEPVQNLPIQKSIDDVDSKLKGIGKPRKFSKFSLYKQLHRHHLHDADSISSIDSTSSYFNHYRSHHNLI</original>
    <variation>IPGPSVVYRQVWESCMGKPDSGMERTTAISSSKTGFNLINLLLISLTGTPRPGCPGMTLPLQSTGRRLVMWHVTSSSAGTSQKL</variation>
    <location>
        <begin position="514"/>
        <end position="597"/>
    </location>
</feature>
<feature type="splice variant" id="VSP_005020" description="In isoform PLD1B." evidence="11 12">
    <original>SYFNHYRSHHNLIHGLKPHFKLFHPSSESEQGLTRPHAD</original>
    <variation>N</variation>
    <location>
        <begin position="585"/>
        <end position="623"/>
    </location>
</feature>
<feature type="splice variant" id="VSP_005019" description="In isoform PLD1C." evidence="12">
    <location>
        <begin position="598"/>
        <end position="1074"/>
    </location>
</feature>
<feature type="splice variant" id="VSP_005021" description="In isoform PLD1D." evidence="13">
    <original>VVLGYLDDPS</original>
    <variation>SKMTPGVEDP</variation>
    <location>
        <begin position="962"/>
        <end position="971"/>
    </location>
</feature>
<feature type="splice variant" id="VSP_005022" description="In isoform PLD1D." evidence="13">
    <location>
        <begin position="972"/>
        <end position="1074"/>
    </location>
</feature>
<feature type="sequence variant" id="VAR_034387" description="In dbSNP:rs9819927.">
    <original>P</original>
    <variation>A</variation>
    <location>
        <position position="49"/>
    </location>
</feature>
<feature type="sequence variant" id="VAR_078985" description="In CVDP1; dbSNP:rs769669104." evidence="8">
    <original>H</original>
    <variation>P</variation>
    <location>
        <position position="442"/>
    </location>
</feature>
<feature type="sequence variant" id="VAR_022056" description="In dbSNP:rs2290480.">
    <original>A</original>
    <variation>S</variation>
    <location>
        <position position="622"/>
    </location>
</feature>
<feature type="sequence variant" id="VAR_022057" description="In dbSNP:rs2287579.">
    <original>V</original>
    <variation>M</variation>
    <location>
        <position position="820"/>
    </location>
</feature>
<feature type="sequence variant" id="VAR_051703" description="In dbSNP:rs9827333.">
    <original>V</original>
    <variation>I</variation>
    <location>
        <position position="1024"/>
    </location>
</feature>
<feature type="sequence conflict" description="In Ref. 3; CAB76564." evidence="14" ref="3">
    <original>S</original>
    <variation>P</variation>
    <location>
        <position position="832"/>
    </location>
</feature>
<feature type="helix" evidence="21">
    <location>
        <begin position="339"/>
        <end position="341"/>
    </location>
</feature>
<feature type="strand" evidence="21">
    <location>
        <begin position="347"/>
        <end position="357"/>
    </location>
</feature>
<feature type="helix" evidence="21">
    <location>
        <begin position="358"/>
        <end position="370"/>
    </location>
</feature>
<feature type="strand" evidence="21">
    <location>
        <begin position="373"/>
        <end position="382"/>
    </location>
</feature>
<feature type="strand" evidence="21">
    <location>
        <begin position="388"/>
        <end position="392"/>
    </location>
</feature>
<feature type="turn" evidence="21">
    <location>
        <begin position="396"/>
        <end position="399"/>
    </location>
</feature>
<feature type="helix" evidence="21">
    <location>
        <begin position="401"/>
        <end position="410"/>
    </location>
</feature>
<feature type="strand" evidence="21">
    <location>
        <begin position="414"/>
        <end position="420"/>
    </location>
</feature>
<feature type="helix" evidence="21">
    <location>
        <begin position="431"/>
        <end position="441"/>
    </location>
</feature>
<feature type="strand" evidence="21">
    <location>
        <begin position="445"/>
        <end position="450"/>
    </location>
</feature>
<feature type="strand" evidence="21">
    <location>
        <begin position="466"/>
        <end position="470"/>
    </location>
</feature>
<feature type="turn" evidence="21">
    <location>
        <begin position="471"/>
        <end position="473"/>
    </location>
</feature>
<feature type="strand" evidence="21">
    <location>
        <begin position="474"/>
        <end position="479"/>
    </location>
</feature>
<feature type="helix" evidence="21">
    <location>
        <begin position="646"/>
        <end position="648"/>
    </location>
</feature>
<feature type="turn" evidence="21">
    <location>
        <begin position="670"/>
        <end position="672"/>
    </location>
</feature>
<feature type="strand" evidence="21">
    <location>
        <begin position="681"/>
        <end position="686"/>
    </location>
</feature>
<feature type="helix" evidence="21">
    <location>
        <begin position="688"/>
        <end position="707"/>
    </location>
</feature>
<feature type="helix" evidence="21">
    <location>
        <begin position="709"/>
        <end position="711"/>
    </location>
</feature>
<feature type="strand" evidence="21">
    <location>
        <begin position="738"/>
        <end position="748"/>
    </location>
</feature>
<feature type="helix" evidence="21">
    <location>
        <begin position="750"/>
        <end position="753"/>
    </location>
</feature>
<feature type="helix" evidence="21">
    <location>
        <begin position="761"/>
        <end position="772"/>
    </location>
</feature>
<feature type="strand" evidence="21">
    <location>
        <begin position="774"/>
        <end position="782"/>
    </location>
</feature>
<feature type="strand" evidence="21">
    <location>
        <begin position="790"/>
        <end position="792"/>
    </location>
</feature>
<feature type="helix" evidence="21">
    <location>
        <begin position="797"/>
        <end position="810"/>
    </location>
</feature>
<feature type="strand" evidence="21">
    <location>
        <begin position="816"/>
        <end position="820"/>
    </location>
</feature>
<feature type="helix" evidence="21">
    <location>
        <begin position="836"/>
        <end position="850"/>
    </location>
</feature>
<feature type="helix" evidence="21">
    <location>
        <begin position="857"/>
        <end position="865"/>
    </location>
</feature>
<feature type="helix" evidence="21">
    <location>
        <begin position="866"/>
        <end position="871"/>
    </location>
</feature>
<feature type="strand" evidence="21">
    <location>
        <begin position="873"/>
        <end position="884"/>
    </location>
</feature>
<feature type="strand" evidence="21">
    <location>
        <begin position="887"/>
        <end position="892"/>
    </location>
</feature>
<feature type="strand" evidence="21">
    <location>
        <begin position="898"/>
        <end position="902"/>
    </location>
</feature>
<feature type="turn" evidence="21">
    <location>
        <begin position="903"/>
        <end position="905"/>
    </location>
</feature>
<feature type="strand" evidence="21">
    <location>
        <begin position="906"/>
        <end position="911"/>
    </location>
</feature>
<feature type="helix" evidence="21">
    <location>
        <begin position="916"/>
        <end position="919"/>
    </location>
</feature>
<feature type="strand" evidence="21">
    <location>
        <begin position="920"/>
        <end position="932"/>
    </location>
</feature>
<feature type="strand" evidence="21">
    <location>
        <begin position="934"/>
        <end position="941"/>
    </location>
</feature>
<feature type="strand" evidence="21">
    <location>
        <begin position="944"/>
        <end position="949"/>
    </location>
</feature>
<feature type="helix" evidence="21">
    <location>
        <begin position="950"/>
        <end position="964"/>
    </location>
</feature>
<feature type="helix" evidence="21">
    <location>
        <begin position="972"/>
        <end position="974"/>
    </location>
</feature>
<feature type="helix" evidence="21">
    <location>
        <begin position="980"/>
        <end position="985"/>
    </location>
</feature>
<feature type="helix" evidence="21">
    <location>
        <begin position="987"/>
        <end position="1002"/>
    </location>
</feature>
<feature type="helix" evidence="21">
    <location>
        <begin position="1013"/>
        <end position="1021"/>
    </location>
</feature>
<feature type="helix" evidence="21">
    <location>
        <begin position="1025"/>
        <end position="1028"/>
    </location>
</feature>
<feature type="helix" evidence="21">
    <location>
        <begin position="1030"/>
        <end position="1037"/>
    </location>
</feature>
<feature type="strand" evidence="21">
    <location>
        <begin position="1042"/>
        <end position="1046"/>
    </location>
</feature>
<feature type="turn" evidence="21">
    <location>
        <begin position="1049"/>
        <end position="1052"/>
    </location>
</feature>
<feature type="helix" evidence="21">
    <location>
        <begin position="1070"/>
        <end position="1072"/>
    </location>
</feature>
<name>PLD1_HUMAN</name>